<gene>
    <name evidence="1" type="primary">clpP1</name>
    <name type="synonym">clpP</name>
    <name type="ordered locus">BH3564</name>
</gene>
<comment type="function">
    <text evidence="1">Cleaves peptides in various proteins in a process that requires ATP hydrolysis. Has a chymotrypsin-like activity. Plays a major role in the degradation of misfolded proteins. ClpXP1 is involved in the complete degradation of the Site-2 clipped anti-sigma-W factor RsiW. This results in the release of SigW and the transcription activation of the genes under the control of the sigma-W factor (By similarity).</text>
</comment>
<comment type="catalytic activity">
    <reaction evidence="1">
        <text>Hydrolysis of proteins to small peptides in the presence of ATP and magnesium. alpha-casein is the usual test substrate. In the absence of ATP, only oligopeptides shorter than five residues are hydrolyzed (such as succinyl-Leu-Tyr-|-NHMec, and Leu-Tyr-Leu-|-Tyr-Trp, in which cleavage of the -Tyr-|-Leu- and -Tyr-|-Trp bonds also occurs).</text>
        <dbReference type="EC" id="3.4.21.92"/>
    </reaction>
</comment>
<comment type="subunit">
    <text evidence="1">Fourteen ClpP subunits assemble into 2 heptameric rings which stack back to back to give a disk-like structure with a central cavity, resembling the structure of eukaryotic proteasomes.</text>
</comment>
<comment type="subcellular location">
    <subcellularLocation>
        <location evidence="1">Cytoplasm</location>
    </subcellularLocation>
</comment>
<comment type="similarity">
    <text evidence="1">Belongs to the peptidase S14 family.</text>
</comment>
<reference key="1">
    <citation type="journal article" date="2000" name="Nucleic Acids Res.">
        <title>Complete genome sequence of the alkaliphilic bacterium Bacillus halodurans and genomic sequence comparison with Bacillus subtilis.</title>
        <authorList>
            <person name="Takami H."/>
            <person name="Nakasone K."/>
            <person name="Takaki Y."/>
            <person name="Maeno G."/>
            <person name="Sasaki R."/>
            <person name="Masui N."/>
            <person name="Fuji F."/>
            <person name="Hirama C."/>
            <person name="Nakamura Y."/>
            <person name="Ogasawara N."/>
            <person name="Kuhara S."/>
            <person name="Horikoshi K."/>
        </authorList>
    </citation>
    <scope>NUCLEOTIDE SEQUENCE [LARGE SCALE GENOMIC DNA]</scope>
    <source>
        <strain>ATCC BAA-125 / DSM 18197 / FERM 7344 / JCM 9153 / C-125</strain>
    </source>
</reference>
<feature type="chain" id="PRO_0000179493" description="ATP-dependent Clp protease proteolytic subunit 1">
    <location>
        <begin position="1"/>
        <end position="194"/>
    </location>
</feature>
<feature type="active site" description="Nucleophile" evidence="1">
    <location>
        <position position="98"/>
    </location>
</feature>
<feature type="active site" evidence="1">
    <location>
        <position position="123"/>
    </location>
</feature>
<protein>
    <recommendedName>
        <fullName evidence="1">ATP-dependent Clp protease proteolytic subunit 1</fullName>
        <ecNumber evidence="1">3.4.21.92</ecNumber>
    </recommendedName>
    <alternativeName>
        <fullName evidence="1">Endopeptidase Clp 1</fullName>
    </alternativeName>
</protein>
<accession>Q9K709</accession>
<dbReference type="EC" id="3.4.21.92" evidence="1"/>
<dbReference type="EMBL" id="BA000004">
    <property type="protein sequence ID" value="BAB07283.1"/>
    <property type="molecule type" value="Genomic_DNA"/>
</dbReference>
<dbReference type="PIR" id="D84095">
    <property type="entry name" value="D84095"/>
</dbReference>
<dbReference type="RefSeq" id="WP_010899693.1">
    <property type="nucleotide sequence ID" value="NC_002570.2"/>
</dbReference>
<dbReference type="SMR" id="Q9K709"/>
<dbReference type="STRING" id="272558.gene:10729477"/>
<dbReference type="MEROPS" id="S14.001"/>
<dbReference type="GeneID" id="87599092"/>
<dbReference type="KEGG" id="bha:BH3564"/>
<dbReference type="eggNOG" id="COG0740">
    <property type="taxonomic scope" value="Bacteria"/>
</dbReference>
<dbReference type="HOGENOM" id="CLU_058707_3_2_9"/>
<dbReference type="OrthoDB" id="9802800at2"/>
<dbReference type="Proteomes" id="UP000001258">
    <property type="component" value="Chromosome"/>
</dbReference>
<dbReference type="GO" id="GO:0005737">
    <property type="term" value="C:cytoplasm"/>
    <property type="evidence" value="ECO:0007669"/>
    <property type="project" value="UniProtKB-SubCell"/>
</dbReference>
<dbReference type="GO" id="GO:0009368">
    <property type="term" value="C:endopeptidase Clp complex"/>
    <property type="evidence" value="ECO:0007669"/>
    <property type="project" value="TreeGrafter"/>
</dbReference>
<dbReference type="GO" id="GO:0004176">
    <property type="term" value="F:ATP-dependent peptidase activity"/>
    <property type="evidence" value="ECO:0007669"/>
    <property type="project" value="InterPro"/>
</dbReference>
<dbReference type="GO" id="GO:0051117">
    <property type="term" value="F:ATPase binding"/>
    <property type="evidence" value="ECO:0007669"/>
    <property type="project" value="TreeGrafter"/>
</dbReference>
<dbReference type="GO" id="GO:0004252">
    <property type="term" value="F:serine-type endopeptidase activity"/>
    <property type="evidence" value="ECO:0007669"/>
    <property type="project" value="UniProtKB-UniRule"/>
</dbReference>
<dbReference type="GO" id="GO:0006515">
    <property type="term" value="P:protein quality control for misfolded or incompletely synthesized proteins"/>
    <property type="evidence" value="ECO:0007669"/>
    <property type="project" value="TreeGrafter"/>
</dbReference>
<dbReference type="CDD" id="cd07017">
    <property type="entry name" value="S14_ClpP_2"/>
    <property type="match status" value="1"/>
</dbReference>
<dbReference type="FunFam" id="3.90.226.10:FF:000001">
    <property type="entry name" value="ATP-dependent Clp protease proteolytic subunit"/>
    <property type="match status" value="1"/>
</dbReference>
<dbReference type="Gene3D" id="3.90.226.10">
    <property type="entry name" value="2-enoyl-CoA Hydratase, Chain A, domain 1"/>
    <property type="match status" value="1"/>
</dbReference>
<dbReference type="HAMAP" id="MF_00444">
    <property type="entry name" value="ClpP"/>
    <property type="match status" value="1"/>
</dbReference>
<dbReference type="InterPro" id="IPR001907">
    <property type="entry name" value="ClpP"/>
</dbReference>
<dbReference type="InterPro" id="IPR029045">
    <property type="entry name" value="ClpP/crotonase-like_dom_sf"/>
</dbReference>
<dbReference type="InterPro" id="IPR023562">
    <property type="entry name" value="ClpP/TepA"/>
</dbReference>
<dbReference type="InterPro" id="IPR033135">
    <property type="entry name" value="ClpP_His_AS"/>
</dbReference>
<dbReference type="InterPro" id="IPR018215">
    <property type="entry name" value="ClpP_Ser_AS"/>
</dbReference>
<dbReference type="NCBIfam" id="TIGR00493">
    <property type="entry name" value="clpP"/>
    <property type="match status" value="1"/>
</dbReference>
<dbReference type="NCBIfam" id="NF001368">
    <property type="entry name" value="PRK00277.1"/>
    <property type="match status" value="1"/>
</dbReference>
<dbReference type="NCBIfam" id="NF009205">
    <property type="entry name" value="PRK12553.1"/>
    <property type="match status" value="1"/>
</dbReference>
<dbReference type="PANTHER" id="PTHR10381">
    <property type="entry name" value="ATP-DEPENDENT CLP PROTEASE PROTEOLYTIC SUBUNIT"/>
    <property type="match status" value="1"/>
</dbReference>
<dbReference type="PANTHER" id="PTHR10381:SF70">
    <property type="entry name" value="ATP-DEPENDENT CLP PROTEASE PROTEOLYTIC SUBUNIT"/>
    <property type="match status" value="1"/>
</dbReference>
<dbReference type="Pfam" id="PF00574">
    <property type="entry name" value="CLP_protease"/>
    <property type="match status" value="1"/>
</dbReference>
<dbReference type="PRINTS" id="PR00127">
    <property type="entry name" value="CLPPROTEASEP"/>
</dbReference>
<dbReference type="SUPFAM" id="SSF52096">
    <property type="entry name" value="ClpP/crotonase"/>
    <property type="match status" value="1"/>
</dbReference>
<dbReference type="PROSITE" id="PS00382">
    <property type="entry name" value="CLP_PROTEASE_HIS"/>
    <property type="match status" value="1"/>
</dbReference>
<dbReference type="PROSITE" id="PS00381">
    <property type="entry name" value="CLP_PROTEASE_SER"/>
    <property type="match status" value="1"/>
</dbReference>
<evidence type="ECO:0000255" key="1">
    <source>
        <dbReference type="HAMAP-Rule" id="MF_00444"/>
    </source>
</evidence>
<proteinExistence type="inferred from homology"/>
<organism>
    <name type="scientific">Halalkalibacterium halodurans (strain ATCC BAA-125 / DSM 18197 / FERM 7344 / JCM 9153 / C-125)</name>
    <name type="common">Bacillus halodurans</name>
    <dbReference type="NCBI Taxonomy" id="272558"/>
    <lineage>
        <taxon>Bacteria</taxon>
        <taxon>Bacillati</taxon>
        <taxon>Bacillota</taxon>
        <taxon>Bacilli</taxon>
        <taxon>Bacillales</taxon>
        <taxon>Bacillaceae</taxon>
        <taxon>Halalkalibacterium (ex Joshi et al. 2022)</taxon>
    </lineage>
</organism>
<name>CLPP1_HALH5</name>
<sequence>MNLIPTVIEQTNRGERAYDIYSRLLKDRIIMLGTAIDDNVANSIVAQLLFLQAEDPDKDISLYINSPGGSITAGMAIYDTMQYIKPNVSTICIGMAASMGAFLLAAGAKGKRFALPNSEVMIHQPLGGTRGQASDIEIHTRRILEMRETLNRILAERTGQPLEQIAKDTDRDNFMTAEKAREYGLIDKVIETTK</sequence>
<keyword id="KW-0963">Cytoplasm</keyword>
<keyword id="KW-0378">Hydrolase</keyword>
<keyword id="KW-0645">Protease</keyword>
<keyword id="KW-1185">Reference proteome</keyword>
<keyword id="KW-0720">Serine protease</keyword>